<accession>B7JL18</accession>
<proteinExistence type="inferred from homology"/>
<sequence>MKQLFRQWYDLSEIKKELTTRNWFPATSGNISIKVSHEPLTFLITASGKDKTKTTPDDFLLVDHLGVPVLETELRPSAETILHTHIYNNTNAGCVLHVHTTDNNVITNLYSDAVTLQNQEIIKALDIWEEGATIHIPIIENHAHIPTLGENFRKHIQGDSGAVLIRNHGITVWGRDSFDAKKRLEAYEFLFQFHIKLLSIQGGVSNGANSYS</sequence>
<name>MTNB_BACC0</name>
<comment type="function">
    <text evidence="1">Catalyzes the dehydration of methylthioribulose-1-phosphate (MTRu-1-P) into 2,3-diketo-5-methylthiopentyl-1-phosphate (DK-MTP-1-P).</text>
</comment>
<comment type="catalytic activity">
    <reaction evidence="1">
        <text>5-(methylsulfanyl)-D-ribulose 1-phosphate = 5-methylsulfanyl-2,3-dioxopentyl phosphate + H2O</text>
        <dbReference type="Rhea" id="RHEA:15549"/>
        <dbReference type="ChEBI" id="CHEBI:15377"/>
        <dbReference type="ChEBI" id="CHEBI:58548"/>
        <dbReference type="ChEBI" id="CHEBI:58828"/>
        <dbReference type="EC" id="4.2.1.109"/>
    </reaction>
</comment>
<comment type="cofactor">
    <cofactor evidence="1">
        <name>Zn(2+)</name>
        <dbReference type="ChEBI" id="CHEBI:29105"/>
    </cofactor>
    <text evidence="1">Binds 1 zinc ion per subunit.</text>
</comment>
<comment type="pathway">
    <text evidence="1">Amino-acid biosynthesis; L-methionine biosynthesis via salvage pathway; L-methionine from S-methyl-5-thio-alpha-D-ribose 1-phosphate: step 2/6.</text>
</comment>
<comment type="subunit">
    <text evidence="1">Homotetramer.</text>
</comment>
<comment type="similarity">
    <text evidence="1">Belongs to the aldolase class II family. MtnB subfamily.</text>
</comment>
<reference key="1">
    <citation type="submission" date="2008-10" db="EMBL/GenBank/DDBJ databases">
        <title>Genome sequence of Bacillus cereus AH820.</title>
        <authorList>
            <person name="Dodson R.J."/>
            <person name="Durkin A.S."/>
            <person name="Rosovitz M.J."/>
            <person name="Rasko D.A."/>
            <person name="Hoffmaster A."/>
            <person name="Ravel J."/>
            <person name="Sutton G."/>
        </authorList>
    </citation>
    <scope>NUCLEOTIDE SEQUENCE [LARGE SCALE GENOMIC DNA]</scope>
    <source>
        <strain>AH820</strain>
    </source>
</reference>
<feature type="chain" id="PRO_1000187341" description="Methylthioribulose-1-phosphate dehydratase">
    <location>
        <begin position="1"/>
        <end position="212"/>
    </location>
</feature>
<feature type="binding site" evidence="1">
    <location>
        <position position="97"/>
    </location>
    <ligand>
        <name>Zn(2+)</name>
        <dbReference type="ChEBI" id="CHEBI:29105"/>
    </ligand>
</feature>
<feature type="binding site" evidence="1">
    <location>
        <position position="99"/>
    </location>
    <ligand>
        <name>Zn(2+)</name>
        <dbReference type="ChEBI" id="CHEBI:29105"/>
    </ligand>
</feature>
<gene>
    <name evidence="1" type="primary">mtnB</name>
    <name type="ordered locus">BCAH820_4059</name>
</gene>
<evidence type="ECO:0000255" key="1">
    <source>
        <dbReference type="HAMAP-Rule" id="MF_01677"/>
    </source>
</evidence>
<dbReference type="EC" id="4.2.1.109" evidence="1"/>
<dbReference type="EMBL" id="CP001283">
    <property type="protein sequence ID" value="ACK88406.1"/>
    <property type="molecule type" value="Genomic_DNA"/>
</dbReference>
<dbReference type="RefSeq" id="WP_000811328.1">
    <property type="nucleotide sequence ID" value="NC_011773.1"/>
</dbReference>
<dbReference type="SMR" id="B7JL18"/>
<dbReference type="KEGG" id="bcu:BCAH820_4059"/>
<dbReference type="HOGENOM" id="CLU_006033_4_1_9"/>
<dbReference type="UniPathway" id="UPA00904">
    <property type="reaction ID" value="UER00875"/>
</dbReference>
<dbReference type="Proteomes" id="UP000001363">
    <property type="component" value="Chromosome"/>
</dbReference>
<dbReference type="GO" id="GO:0005737">
    <property type="term" value="C:cytoplasm"/>
    <property type="evidence" value="ECO:0007669"/>
    <property type="project" value="InterPro"/>
</dbReference>
<dbReference type="GO" id="GO:0046570">
    <property type="term" value="F:methylthioribulose 1-phosphate dehydratase activity"/>
    <property type="evidence" value="ECO:0007669"/>
    <property type="project" value="UniProtKB-UniRule"/>
</dbReference>
<dbReference type="GO" id="GO:0008270">
    <property type="term" value="F:zinc ion binding"/>
    <property type="evidence" value="ECO:0007669"/>
    <property type="project" value="UniProtKB-UniRule"/>
</dbReference>
<dbReference type="GO" id="GO:0019509">
    <property type="term" value="P:L-methionine salvage from methylthioadenosine"/>
    <property type="evidence" value="ECO:0007669"/>
    <property type="project" value="UniProtKB-UniRule"/>
</dbReference>
<dbReference type="FunFam" id="3.40.225.10:FF:000007">
    <property type="entry name" value="Methylthioribulose-1-phosphate dehydratase"/>
    <property type="match status" value="1"/>
</dbReference>
<dbReference type="Gene3D" id="3.40.225.10">
    <property type="entry name" value="Class II aldolase/adducin N-terminal domain"/>
    <property type="match status" value="1"/>
</dbReference>
<dbReference type="HAMAP" id="MF_01677">
    <property type="entry name" value="Salvage_MtnB"/>
    <property type="match status" value="1"/>
</dbReference>
<dbReference type="InterPro" id="IPR001303">
    <property type="entry name" value="Aldolase_II/adducin_N"/>
</dbReference>
<dbReference type="InterPro" id="IPR036409">
    <property type="entry name" value="Aldolase_II/adducin_N_sf"/>
</dbReference>
<dbReference type="InterPro" id="IPR017714">
    <property type="entry name" value="MethylthioRu-1-P_deHdtase_MtnB"/>
</dbReference>
<dbReference type="NCBIfam" id="NF005244">
    <property type="entry name" value="PRK06754.1"/>
    <property type="match status" value="1"/>
</dbReference>
<dbReference type="NCBIfam" id="TIGR03328">
    <property type="entry name" value="salvage_mtnB"/>
    <property type="match status" value="1"/>
</dbReference>
<dbReference type="PANTHER" id="PTHR10640">
    <property type="entry name" value="METHYLTHIORIBULOSE-1-PHOSPHATE DEHYDRATASE"/>
    <property type="match status" value="1"/>
</dbReference>
<dbReference type="PANTHER" id="PTHR10640:SF7">
    <property type="entry name" value="METHYLTHIORIBULOSE-1-PHOSPHATE DEHYDRATASE"/>
    <property type="match status" value="1"/>
</dbReference>
<dbReference type="Pfam" id="PF00596">
    <property type="entry name" value="Aldolase_II"/>
    <property type="match status" value="1"/>
</dbReference>
<dbReference type="SMART" id="SM01007">
    <property type="entry name" value="Aldolase_II"/>
    <property type="match status" value="1"/>
</dbReference>
<dbReference type="SUPFAM" id="SSF53639">
    <property type="entry name" value="AraD/HMP-PK domain-like"/>
    <property type="match status" value="1"/>
</dbReference>
<keyword id="KW-0028">Amino-acid biosynthesis</keyword>
<keyword id="KW-0456">Lyase</keyword>
<keyword id="KW-0479">Metal-binding</keyword>
<keyword id="KW-0486">Methionine biosynthesis</keyword>
<keyword id="KW-0862">Zinc</keyword>
<protein>
    <recommendedName>
        <fullName evidence="1">Methylthioribulose-1-phosphate dehydratase</fullName>
        <shortName evidence="1">MTRu-1-P dehydratase</shortName>
        <ecNumber evidence="1">4.2.1.109</ecNumber>
    </recommendedName>
</protein>
<organism>
    <name type="scientific">Bacillus cereus (strain AH820)</name>
    <dbReference type="NCBI Taxonomy" id="405535"/>
    <lineage>
        <taxon>Bacteria</taxon>
        <taxon>Bacillati</taxon>
        <taxon>Bacillota</taxon>
        <taxon>Bacilli</taxon>
        <taxon>Bacillales</taxon>
        <taxon>Bacillaceae</taxon>
        <taxon>Bacillus</taxon>
        <taxon>Bacillus cereus group</taxon>
    </lineage>
</organism>